<proteinExistence type="evidence at protein level"/>
<name>TPSVS_VITVI</name>
<gene>
    <name type="primary">ValCS</name>
</gene>
<accession>Q6Q3H2</accession>
<accession>C1JXK7</accession>
<reference key="1">
    <citation type="journal article" date="2004" name="Phytochemistry">
        <title>Vitis vinifera terpenoid cyclases: functional identification of two sesquiterpene synthase cDNAs encoding (+)-valencene synthase and (-)-germacrene D synthase and expression of mono- and sesquiterpene synthases in grapevine flowers and berries.</title>
        <authorList>
            <person name="Lucker J."/>
            <person name="Bowen P."/>
            <person name="Bohlmann J."/>
        </authorList>
    </citation>
    <scope>NUCLEOTIDE SEQUENCE [MRNA]</scope>
    <scope>FUNCTION</scope>
    <scope>CATALYTIC ACTIVITY</scope>
    <scope>TISSUE SPECIFICITY</scope>
    <scope>DEVELOPMENTAL STAGE</scope>
    <source>
        <strain>cv. Gewuerztraminer</strain>
    </source>
</reference>
<reference key="2">
    <citation type="submission" date="2004-02" db="EMBL/GenBank/DDBJ databases">
        <authorList>
            <person name="Steinmetz A.A."/>
            <person name="Lommele A."/>
            <person name="Drescher B."/>
            <person name="Driesel A.J."/>
        </authorList>
    </citation>
    <scope>NUCLEOTIDE SEQUENCE [MRNA]</scope>
    <source>
        <strain>cv. Gewuerztraminer</strain>
    </source>
</reference>
<reference key="3">
    <citation type="journal article" date="2009" name="Proc. Natl. Acad. Sci. U.S.A.">
        <title>The bouquet of grapevine (Vitis vinifera L. cv. Cabernet Sauvignon) flowers arises from the biosynthesis of sesquiterpene volatiles in pollen grains.</title>
        <authorList>
            <person name="Martin D.M."/>
            <person name="Toub O."/>
            <person name="Chiang A."/>
            <person name="Lo B.C."/>
            <person name="Ohse S."/>
            <person name="Lund S.T."/>
            <person name="Bohlmann J."/>
        </authorList>
    </citation>
    <scope>NUCLEOTIDE SEQUENCE [MRNA]</scope>
    <scope>FUNCTION</scope>
    <scope>CATALYTIC ACTIVITY</scope>
    <scope>TISSUE SPECIFICITY</scope>
    <scope>DEVELOPMENTAL STAGE</scope>
    <scope>SUBCELLULAR LOCATION</scope>
    <source>
        <strain>cv. Cabernet Sauvignon</strain>
        <tissue>Flower</tissue>
    </source>
</reference>
<keyword id="KW-0963">Cytoplasm</keyword>
<keyword id="KW-0456">Lyase</keyword>
<keyword id="KW-0460">Magnesium</keyword>
<keyword id="KW-0479">Metal-binding</keyword>
<comment type="function">
    <text evidence="3 4">Involved in the biosynthesis of valencene, a major volatile emitted from flowers of grapevine. Can use farnesyl diphosphate as substrate, but not geranyl diphosphate or geranylgeranyl diphosphate. Produces mainly (+)-valencene and (-)-7-epi-alpha-selinene along with five minor products.</text>
</comment>
<comment type="catalytic activity">
    <reaction evidence="3 4">
        <text>(2E,6E)-farnesyl diphosphate = (+)-valencene + diphosphate</text>
        <dbReference type="Rhea" id="RHEA:29511"/>
        <dbReference type="ChEBI" id="CHEBI:33019"/>
        <dbReference type="ChEBI" id="CHEBI:61700"/>
        <dbReference type="ChEBI" id="CHEBI:175763"/>
        <dbReference type="EC" id="4.2.3.73"/>
    </reaction>
</comment>
<comment type="catalytic activity">
    <reaction evidence="3 4">
        <text>(2E,6E)-farnesyl diphosphate = (-)-7-epi-alpha-selinene + diphosphate</text>
        <dbReference type="Rhea" id="RHEA:30383"/>
        <dbReference type="ChEBI" id="CHEBI:33019"/>
        <dbReference type="ChEBI" id="CHEBI:62224"/>
        <dbReference type="ChEBI" id="CHEBI:175763"/>
        <dbReference type="EC" id="4.2.3.86"/>
    </reaction>
</comment>
<comment type="cofactor">
    <cofactor evidence="1">
        <name>Mg(2+)</name>
        <dbReference type="ChEBI" id="CHEBI:18420"/>
    </cofactor>
    <text evidence="1">Binds 3 Mg(2+) ions per subunit.</text>
</comment>
<comment type="pathway">
    <text>Secondary metabolite biosynthesis; terpenoid biosynthesis.</text>
</comment>
<comment type="subcellular location">
    <subcellularLocation>
        <location evidence="4">Cytoplasm</location>
    </subcellularLocation>
    <text>Localizes close to lipid bodies in maturing microspores.</text>
</comment>
<comment type="tissue specificity">
    <text evidence="3 4">Expressed in flowers and anthers. Detected inside the pollen grains, but not in stems, leaves, tendrils, roots, seeds, pistils or caps.</text>
</comment>
<comment type="developmental stage">
    <text evidence="3 4">Expressed at prebloom in flower buds but barely detectable after anthesis and in early stages of fruit onset. Detected again two months after flowering, then increases and reaches a maximum when the fruit is at peak maturity. Also expressed in very young seeds.</text>
</comment>
<comment type="domain">
    <text evidence="1">The Asp-Asp-Xaa-Xaa-Asp/Glu (DDXXD/E) motif is important for the catalytic activity, presumably through binding to Mg(2+).</text>
</comment>
<comment type="similarity">
    <text evidence="5">Belongs to the terpene synthase family. Tpsa subfamily.</text>
</comment>
<sequence length="556" mass="64432">MSTQVSASSLAQIPQPKNRPVANFHPNIWGDQFITYTPEDKVTRACKEEQIEDLKKEVKRKLTAAAVANPSQLLNFIDAVQRLGVAYHFEQEIEEALQHICNSFHDCNDMDGDLYNIALGFRLLRQQGYTISCDIFNKFTDERGRFKEALISDVRGMLGLYEAAHLRVHGEDILAKALAFTTTHLKAMVESLGYHLAEQVAHALNRPIRKGLERLEARWYISVYQDEAFHDKTLLELAKLDFNLVQSLHKEELSNLARWWKELDFATKLPFARDRLVEGYFWMHGVYFEPQYLRGRRILTKVIAMTSILDDIHDAYGTPEELKLFIEAIERWDINSINQLPEYMKLCYVALLDVYKEIEEEMEKEGNQYRVHYAKEVMKNQVRAYFAEAKWLHEEHVPAFEEYMRVALASSGYCLLATTSFVGMGEIATKEAFDWVTSDPKIMSSSNFITRLMDDIKSHKFEQKRGHVTSAVECYMKQYGVSEEQVYSEFQKQIENAWLDINQECLKPTAVSMPLLARLLNFTRTMDVIYKEQDSYTHVGKVMRDNIASVFINAVI</sequence>
<protein>
    <recommendedName>
        <fullName>Valencene synthase</fullName>
        <shortName>VvVal</shortName>
        <ecNumber evidence="3 4">4.2.3.73</ecNumber>
    </recommendedName>
    <alternativeName>
        <fullName>7-epi-alpha-selinene synthase</fullName>
        <ecNumber evidence="3 4">4.2.3.86</ecNumber>
    </alternativeName>
</protein>
<dbReference type="EC" id="4.2.3.73" evidence="3 4"/>
<dbReference type="EC" id="4.2.3.86" evidence="3 4"/>
<dbReference type="EMBL" id="AY561843">
    <property type="protein sequence ID" value="AAS66358.1"/>
    <property type="molecule type" value="mRNA"/>
</dbReference>
<dbReference type="EMBL" id="FJ696653">
    <property type="protein sequence ID" value="ACO36239.1"/>
    <property type="molecule type" value="mRNA"/>
</dbReference>
<dbReference type="RefSeq" id="NP_001268215.1">
    <property type="nucleotide sequence ID" value="NM_001281286.1"/>
</dbReference>
<dbReference type="SMR" id="Q6Q3H2"/>
<dbReference type="PaxDb" id="29760-VIT_18s0001g05460.t01"/>
<dbReference type="GeneID" id="100232955"/>
<dbReference type="BioCyc" id="MetaCyc:MONOMER-14952"/>
<dbReference type="BRENDA" id="4.2.3.73">
    <property type="organism ID" value="6671"/>
</dbReference>
<dbReference type="BRENDA" id="4.2.3.86">
    <property type="organism ID" value="6671"/>
</dbReference>
<dbReference type="UniPathway" id="UPA00213"/>
<dbReference type="ExpressionAtlas" id="Q6Q3H2">
    <property type="expression patterns" value="baseline"/>
</dbReference>
<dbReference type="GO" id="GO:0005737">
    <property type="term" value="C:cytoplasm"/>
    <property type="evidence" value="ECO:0007669"/>
    <property type="project" value="UniProtKB-SubCell"/>
</dbReference>
<dbReference type="GO" id="GO:0102906">
    <property type="term" value="F:7-epi-alpha-selinene synthase activity"/>
    <property type="evidence" value="ECO:0007669"/>
    <property type="project" value="UniProtKB-EC"/>
</dbReference>
<dbReference type="GO" id="GO:0000287">
    <property type="term" value="F:magnesium ion binding"/>
    <property type="evidence" value="ECO:0007669"/>
    <property type="project" value="InterPro"/>
</dbReference>
<dbReference type="GO" id="GO:0010333">
    <property type="term" value="F:terpene synthase activity"/>
    <property type="evidence" value="ECO:0007669"/>
    <property type="project" value="InterPro"/>
</dbReference>
<dbReference type="GO" id="GO:0102905">
    <property type="term" value="F:valencene synthase activity"/>
    <property type="evidence" value="ECO:0007669"/>
    <property type="project" value="UniProtKB-EC"/>
</dbReference>
<dbReference type="GO" id="GO:0016102">
    <property type="term" value="P:diterpenoid biosynthetic process"/>
    <property type="evidence" value="ECO:0007669"/>
    <property type="project" value="InterPro"/>
</dbReference>
<dbReference type="CDD" id="cd00684">
    <property type="entry name" value="Terpene_cyclase_plant_C1"/>
    <property type="match status" value="1"/>
</dbReference>
<dbReference type="FunFam" id="1.10.600.10:FF:000007">
    <property type="entry name" value="Isoprene synthase, chloroplastic"/>
    <property type="match status" value="1"/>
</dbReference>
<dbReference type="FunFam" id="1.50.10.130:FF:000001">
    <property type="entry name" value="Isoprene synthase, chloroplastic"/>
    <property type="match status" value="1"/>
</dbReference>
<dbReference type="Gene3D" id="1.10.600.10">
    <property type="entry name" value="Farnesyl Diphosphate Synthase"/>
    <property type="match status" value="1"/>
</dbReference>
<dbReference type="Gene3D" id="1.50.10.130">
    <property type="entry name" value="Terpene synthase, N-terminal domain"/>
    <property type="match status" value="1"/>
</dbReference>
<dbReference type="InterPro" id="IPR008949">
    <property type="entry name" value="Isoprenoid_synthase_dom_sf"/>
</dbReference>
<dbReference type="InterPro" id="IPR034741">
    <property type="entry name" value="Terpene_cyclase-like_1_C"/>
</dbReference>
<dbReference type="InterPro" id="IPR044814">
    <property type="entry name" value="Terpene_cyclase_plant_C1"/>
</dbReference>
<dbReference type="InterPro" id="IPR001906">
    <property type="entry name" value="Terpene_synth_N"/>
</dbReference>
<dbReference type="InterPro" id="IPR036965">
    <property type="entry name" value="Terpene_synth_N_sf"/>
</dbReference>
<dbReference type="InterPro" id="IPR050148">
    <property type="entry name" value="Terpene_synthase-like"/>
</dbReference>
<dbReference type="InterPro" id="IPR005630">
    <property type="entry name" value="Terpene_synthase_metal-bd"/>
</dbReference>
<dbReference type="InterPro" id="IPR008930">
    <property type="entry name" value="Terpenoid_cyclase/PrenylTrfase"/>
</dbReference>
<dbReference type="PANTHER" id="PTHR31225">
    <property type="entry name" value="OS04G0344100 PROTEIN-RELATED"/>
    <property type="match status" value="1"/>
</dbReference>
<dbReference type="PANTHER" id="PTHR31225:SF241">
    <property type="entry name" value="TERPENE SYNTHASE FAMILY, METAL-BINDING DOMAIN PROTEIN"/>
    <property type="match status" value="1"/>
</dbReference>
<dbReference type="Pfam" id="PF01397">
    <property type="entry name" value="Terpene_synth"/>
    <property type="match status" value="1"/>
</dbReference>
<dbReference type="Pfam" id="PF03936">
    <property type="entry name" value="Terpene_synth_C"/>
    <property type="match status" value="1"/>
</dbReference>
<dbReference type="SFLD" id="SFLDS00005">
    <property type="entry name" value="Isoprenoid_Synthase_Type_I"/>
    <property type="match status" value="1"/>
</dbReference>
<dbReference type="SFLD" id="SFLDG01019">
    <property type="entry name" value="Terpene_Cyclase_Like_1_C_Termi"/>
    <property type="match status" value="1"/>
</dbReference>
<dbReference type="SUPFAM" id="SSF48239">
    <property type="entry name" value="Terpenoid cyclases/Protein prenyltransferases"/>
    <property type="match status" value="1"/>
</dbReference>
<dbReference type="SUPFAM" id="SSF48576">
    <property type="entry name" value="Terpenoid synthases"/>
    <property type="match status" value="1"/>
</dbReference>
<evidence type="ECO:0000250" key="1"/>
<evidence type="ECO:0000256" key="2">
    <source>
        <dbReference type="SAM" id="MobiDB-lite"/>
    </source>
</evidence>
<evidence type="ECO:0000269" key="3">
    <source>
    </source>
</evidence>
<evidence type="ECO:0000269" key="4">
    <source>
    </source>
</evidence>
<evidence type="ECO:0000305" key="5"/>
<organism>
    <name type="scientific">Vitis vinifera</name>
    <name type="common">Grape</name>
    <dbReference type="NCBI Taxonomy" id="29760"/>
    <lineage>
        <taxon>Eukaryota</taxon>
        <taxon>Viridiplantae</taxon>
        <taxon>Streptophyta</taxon>
        <taxon>Embryophyta</taxon>
        <taxon>Tracheophyta</taxon>
        <taxon>Spermatophyta</taxon>
        <taxon>Magnoliopsida</taxon>
        <taxon>eudicotyledons</taxon>
        <taxon>Gunneridae</taxon>
        <taxon>Pentapetalae</taxon>
        <taxon>rosids</taxon>
        <taxon>Vitales</taxon>
        <taxon>Vitaceae</taxon>
        <taxon>Viteae</taxon>
        <taxon>Vitis</taxon>
    </lineage>
</organism>
<feature type="chain" id="PRO_0000412253" description="Valencene synthase">
    <location>
        <begin position="1"/>
        <end position="556"/>
    </location>
</feature>
<feature type="region of interest" description="Disordered" evidence="2">
    <location>
        <begin position="1"/>
        <end position="24"/>
    </location>
</feature>
<feature type="short sequence motif" description="DDXXD motif">
    <location>
        <begin position="310"/>
        <end position="314"/>
    </location>
</feature>
<feature type="compositionally biased region" description="Polar residues" evidence="2">
    <location>
        <begin position="1"/>
        <end position="12"/>
    </location>
</feature>
<feature type="binding site" evidence="1">
    <location>
        <position position="310"/>
    </location>
    <ligand>
        <name>Mg(2+)</name>
        <dbReference type="ChEBI" id="CHEBI:18420"/>
        <label>1</label>
    </ligand>
</feature>
<feature type="binding site" evidence="1">
    <location>
        <position position="310"/>
    </location>
    <ligand>
        <name>Mg(2+)</name>
        <dbReference type="ChEBI" id="CHEBI:18420"/>
        <label>2</label>
    </ligand>
</feature>
<feature type="binding site" evidence="1">
    <location>
        <position position="314"/>
    </location>
    <ligand>
        <name>Mg(2+)</name>
        <dbReference type="ChEBI" id="CHEBI:18420"/>
        <label>1</label>
    </ligand>
</feature>
<feature type="binding site" evidence="1">
    <location>
        <position position="314"/>
    </location>
    <ligand>
        <name>Mg(2+)</name>
        <dbReference type="ChEBI" id="CHEBI:18420"/>
        <label>2</label>
    </ligand>
</feature>
<feature type="binding site" evidence="1">
    <location>
        <position position="462"/>
    </location>
    <ligand>
        <name>Mg(2+)</name>
        <dbReference type="ChEBI" id="CHEBI:18420"/>
        <label>3</label>
    </ligand>
</feature>
<feature type="sequence conflict" description="In Ref. 3; ACO36239." evidence="5" ref="3">
    <original>T</original>
    <variation>A</variation>
    <location>
        <position position="469"/>
    </location>
</feature>
<feature type="sequence conflict" description="In Ref. 3; ACO36239." evidence="5" ref="3">
    <original>F</original>
    <variation>L</variation>
    <location>
        <position position="522"/>
    </location>
</feature>